<gene>
    <name type="primary">pld3</name>
</gene>
<comment type="function">
    <text evidence="1 3">5'-&gt;3' DNA exonuclease which digests single-stranded DNA (ssDNA) (By similarity). Regulates inflammatory cytokine responses via the degradation of nucleic acids, by reducing the concentration of ssDNA able to stimulate TLR9, a nucleotide-sensing receptor in collaboration with PLD4 (By similarity). May be important in myotube formation. Plays a role in lysosomal homeostasis. Involved in the regulation of endosomal protein sorting (By similarity).</text>
</comment>
<comment type="catalytic activity">
    <reaction evidence="3">
        <text>Exonucleolytic cleavage in the 5'- to 3'-direction to yield nucleoside 3'-phosphates.</text>
        <dbReference type="EC" id="3.1.16.1"/>
    </reaction>
</comment>
<comment type="subcellular location">
    <subcellularLocation>
        <location evidence="3">Endoplasmic reticulum membrane</location>
        <topology evidence="3">Single-pass type II membrane protein</topology>
    </subcellularLocation>
    <subcellularLocation>
        <location evidence="3">Lysosome lumen</location>
    </subcellularLocation>
    <subcellularLocation>
        <location evidence="3">Early endosome membrane</location>
        <topology evidence="3">Single-pass type II membrane protein</topology>
    </subcellularLocation>
    <subcellularLocation>
        <location evidence="3">Late endosome membrane</location>
        <topology evidence="3">Single-pass type II membrane protein</topology>
    </subcellularLocation>
    <subcellularLocation>
        <location evidence="3">Golgi apparatus membrane</location>
        <topology evidence="3">Single-pass type II membrane protein</topology>
    </subcellularLocation>
    <subcellularLocation>
        <location evidence="3">Endosome membrane</location>
        <topology evidence="3">Single-pass type II membrane protein</topology>
    </subcellularLocation>
    <text evidence="3">Localizes to ER-associated vesicles in differentiating myotubes. The soluble form in lysosome arises by proteolytic processing of the membrane-bound form.</text>
</comment>
<comment type="PTM">
    <text evidence="3">N-glycosylated.</text>
</comment>
<comment type="PTM">
    <text evidence="3">Proteolytically processed to a soluble form that is stable within endosomes and lysosomes. During transport through the secretory pathway becomes proteolysed by cysteine proteases, thereby releasing a stable soluble lysosomal lumenal polypeptide, whereas the transmembrane-bound fragment is rapidly degraded. Its transport route to lysosomes involves ubiquitination and the ESCRT complex.</text>
</comment>
<comment type="PTM">
    <text evidence="3">Ubiquitinated. Ubiquitination mediates sorting into lysosomes.</text>
</comment>
<comment type="similarity">
    <text evidence="6">Belongs to the phospholipase D family.</text>
</comment>
<comment type="caution">
    <text evidence="1 2">It was initially thought that PDL3 has phospholipase D activity due to its HKD motifs. The second HKD motif contains Glu instead of the canonical Asp. Its enzyme activity is therefore unsure. Catalytic phospholipase D activity is still controversial (By similarity). Its closest homolog PLD4, exhibits no phospholipase activity (By similarity).</text>
</comment>
<evidence type="ECO:0000250" key="1">
    <source>
        <dbReference type="UniProtKB" id="O35405"/>
    </source>
</evidence>
<evidence type="ECO:0000250" key="2">
    <source>
        <dbReference type="UniProtKB" id="Q8BG07"/>
    </source>
</evidence>
<evidence type="ECO:0000250" key="3">
    <source>
        <dbReference type="UniProtKB" id="Q8IV08"/>
    </source>
</evidence>
<evidence type="ECO:0000255" key="4"/>
<evidence type="ECO:0000255" key="5">
    <source>
        <dbReference type="PROSITE-ProRule" id="PRU00153"/>
    </source>
</evidence>
<evidence type="ECO:0000305" key="6"/>
<feature type="chain" id="PRO_0000280332" description="5'-3' exonuclease PLD3">
    <location>
        <begin position="1"/>
        <end position="494"/>
    </location>
</feature>
<feature type="topological domain" description="Cytoplasmic" evidence="4">
    <location>
        <begin position="1"/>
        <end position="37"/>
    </location>
</feature>
<feature type="transmembrane region" description="Helical; Signal-anchor for type II membrane protein" evidence="4">
    <location>
        <begin position="38"/>
        <end position="58"/>
    </location>
</feature>
<feature type="topological domain" description="Lumenal" evidence="4">
    <location>
        <begin position="59"/>
        <end position="494"/>
    </location>
</feature>
<feature type="domain" description="PLD phosphodiesterase 1" evidence="5">
    <location>
        <begin position="198"/>
        <end position="225"/>
    </location>
</feature>
<feature type="domain" description="PLD phosphodiesterase 2" evidence="5">
    <location>
        <begin position="413"/>
        <end position="439"/>
    </location>
</feature>
<feature type="active site" evidence="5">
    <location>
        <position position="203"/>
    </location>
</feature>
<feature type="active site" evidence="5">
    <location>
        <position position="205"/>
    </location>
</feature>
<feature type="active site" evidence="5">
    <location>
        <position position="210"/>
    </location>
</feature>
<feature type="active site" evidence="5">
    <location>
        <position position="418"/>
    </location>
</feature>
<feature type="active site" evidence="5">
    <location>
        <position position="420"/>
    </location>
</feature>
<feature type="active site" evidence="5">
    <location>
        <position position="425"/>
    </location>
</feature>
<feature type="glycosylation site" description="N-linked (GlcNAc...) asparagine" evidence="4">
    <location>
        <position position="100"/>
    </location>
</feature>
<feature type="glycosylation site" description="N-linked (GlcNAc...) asparagine" evidence="4">
    <location>
        <position position="238"/>
    </location>
</feature>
<feature type="glycosylation site" description="N-linked (GlcNAc...) asparagine" evidence="4">
    <location>
        <position position="260"/>
    </location>
</feature>
<feature type="glycosylation site" description="N-linked (GlcNAc...) asparagine" evidence="4">
    <location>
        <position position="270"/>
    </location>
</feature>
<feature type="glycosylation site" description="N-linked (GlcNAc...) asparagine" evidence="4">
    <location>
        <position position="286"/>
    </location>
</feature>
<feature type="glycosylation site" description="N-linked (GlcNAc...) asparagine" evidence="4">
    <location>
        <position position="389"/>
    </location>
</feature>
<feature type="glycosylation site" description="N-linked (GlcNAc...) asparagine" evidence="4">
    <location>
        <position position="434"/>
    </location>
</feature>
<feature type="glycosylation site" description="N-linked (GlcNAc...) asparagine" evidence="4">
    <location>
        <position position="451"/>
    </location>
</feature>
<feature type="glycosylation site" description="N-linked (GlcNAc...) asparagine" evidence="4">
    <location>
        <position position="477"/>
    </location>
</feature>
<accession>Q640B3</accession>
<sequence>MNPKVEYKQIQSHDEAENQVLQHECHQAKARKYYRCAVVIAIIITLLFCVLASQLLLFPLFSITSQTTTEIVLNKDIQCDDQCRFVLVESIPEGLVYDANATINPSIFQSWLNILTSAKSSVDIASFYWTLTNEDTQTQEPSAHQGELILQELLNLKQRGVSVRVAVNPPDSPLRAKDISALKDSGADVRVVDLPKLTDGVLHTKFWVVDSEHFYIGSANMDWRSLTQVKELGATIYNCSCLAEDLKKIFEAYWILGLPNATLPSPWPVNYSTPYNKDTPMQVMLNSTASQVYISSSPPPLSATGRTDDLQSIINIIDDAKKFVYISVMDYSPTEEFSHPRRYWPYIDNHLRKAVYERNVNVRLLISCWQNSRPSMFTFLRSLAALHSNKSHYNIEVKIFVVPATEVQKKIPYARVNHNKYMVTDRVAYIGTSNWSGDYFIHTAGSALIVNQTQSVGTSDTIQMQLQAVFERDWNSNYSRTFNTLSSWKEKCIF</sequence>
<organism>
    <name type="scientific">Xenopus tropicalis</name>
    <name type="common">Western clawed frog</name>
    <name type="synonym">Silurana tropicalis</name>
    <dbReference type="NCBI Taxonomy" id="8364"/>
    <lineage>
        <taxon>Eukaryota</taxon>
        <taxon>Metazoa</taxon>
        <taxon>Chordata</taxon>
        <taxon>Craniata</taxon>
        <taxon>Vertebrata</taxon>
        <taxon>Euteleostomi</taxon>
        <taxon>Amphibia</taxon>
        <taxon>Batrachia</taxon>
        <taxon>Anura</taxon>
        <taxon>Pipoidea</taxon>
        <taxon>Pipidae</taxon>
        <taxon>Xenopodinae</taxon>
        <taxon>Xenopus</taxon>
        <taxon>Silurana</taxon>
    </lineage>
</organism>
<protein>
    <recommendedName>
        <fullName>5'-3' exonuclease PLD3</fullName>
        <ecNumber evidence="3">3.1.16.1</ecNumber>
    </recommendedName>
    <alternativeName>
        <fullName>Choline phosphatase 3</fullName>
    </alternativeName>
    <alternativeName>
        <fullName>Phosphatidylcholine-hydrolyzing phospholipase D3</fullName>
    </alternativeName>
    <alternativeName>
        <fullName>Phospholipase D3</fullName>
        <shortName>PLD 3</shortName>
    </alternativeName>
</protein>
<dbReference type="EC" id="3.1.16.1" evidence="3"/>
<dbReference type="EMBL" id="BC082717">
    <property type="protein sequence ID" value="AAH82717.1"/>
    <property type="molecule type" value="mRNA"/>
</dbReference>
<dbReference type="RefSeq" id="NP_001011023.1">
    <property type="nucleotide sequence ID" value="NM_001011023.1"/>
</dbReference>
<dbReference type="SMR" id="Q640B3"/>
<dbReference type="FunCoup" id="Q640B3">
    <property type="interactions" value="822"/>
</dbReference>
<dbReference type="STRING" id="8364.ENSXETP00000009562"/>
<dbReference type="GlyCosmos" id="Q640B3">
    <property type="glycosylation" value="9 sites, No reported glycans"/>
</dbReference>
<dbReference type="PaxDb" id="8364-ENSXETP00000036949"/>
<dbReference type="DNASU" id="496432"/>
<dbReference type="GeneID" id="496432"/>
<dbReference type="KEGG" id="xtr:496432"/>
<dbReference type="AGR" id="Xenbase:XB-GENE-1006824"/>
<dbReference type="CTD" id="23646"/>
<dbReference type="Xenbase" id="XB-GENE-1006824">
    <property type="gene designation" value="pld3"/>
</dbReference>
<dbReference type="eggNOG" id="KOG3603">
    <property type="taxonomic scope" value="Eukaryota"/>
</dbReference>
<dbReference type="HOGENOM" id="CLU_027021_0_0_1"/>
<dbReference type="InParanoid" id="Q640B3"/>
<dbReference type="OrthoDB" id="1923775at2759"/>
<dbReference type="TreeFam" id="TF313378"/>
<dbReference type="Reactome" id="R-XTR-2029485">
    <property type="pathway name" value="Role of phospholipids in phagocytosis"/>
</dbReference>
<dbReference type="Proteomes" id="UP000008143">
    <property type="component" value="Chromosome 8"/>
</dbReference>
<dbReference type="GO" id="GO:0031901">
    <property type="term" value="C:early endosome membrane"/>
    <property type="evidence" value="ECO:0000250"/>
    <property type="project" value="UniProtKB"/>
</dbReference>
<dbReference type="GO" id="GO:0005789">
    <property type="term" value="C:endoplasmic reticulum membrane"/>
    <property type="evidence" value="ECO:0000250"/>
    <property type="project" value="UniProtKB"/>
</dbReference>
<dbReference type="GO" id="GO:0000139">
    <property type="term" value="C:Golgi membrane"/>
    <property type="evidence" value="ECO:0000250"/>
    <property type="project" value="UniProtKB"/>
</dbReference>
<dbReference type="GO" id="GO:0031902">
    <property type="term" value="C:late endosome membrane"/>
    <property type="evidence" value="ECO:0000250"/>
    <property type="project" value="UniProtKB"/>
</dbReference>
<dbReference type="GO" id="GO:0043202">
    <property type="term" value="C:lysosomal lumen"/>
    <property type="evidence" value="ECO:0000250"/>
    <property type="project" value="UniProtKB"/>
</dbReference>
<dbReference type="GO" id="GO:0045145">
    <property type="term" value="F:single-stranded DNA 5'-3' DNA exonuclease activity"/>
    <property type="evidence" value="ECO:0000250"/>
    <property type="project" value="UniProtKB"/>
</dbReference>
<dbReference type="GO" id="GO:0002376">
    <property type="term" value="P:immune system process"/>
    <property type="evidence" value="ECO:0007669"/>
    <property type="project" value="UniProtKB-KW"/>
</dbReference>
<dbReference type="GO" id="GO:0006954">
    <property type="term" value="P:inflammatory response"/>
    <property type="evidence" value="ECO:0007669"/>
    <property type="project" value="UniProtKB-KW"/>
</dbReference>
<dbReference type="GO" id="GO:0014902">
    <property type="term" value="P:myotube differentiation"/>
    <property type="evidence" value="ECO:0000250"/>
    <property type="project" value="UniProtKB"/>
</dbReference>
<dbReference type="GO" id="GO:1900015">
    <property type="term" value="P:regulation of cytokine production involved in inflammatory response"/>
    <property type="evidence" value="ECO:0000250"/>
    <property type="project" value="UniProtKB"/>
</dbReference>
<dbReference type="CDD" id="cd09144">
    <property type="entry name" value="PLDc_vPLD3_1"/>
    <property type="match status" value="1"/>
</dbReference>
<dbReference type="Gene3D" id="3.30.870.10">
    <property type="entry name" value="Endonuclease Chain A"/>
    <property type="match status" value="2"/>
</dbReference>
<dbReference type="InterPro" id="IPR050874">
    <property type="entry name" value="Diverse_PLD-related"/>
</dbReference>
<dbReference type="InterPro" id="IPR032803">
    <property type="entry name" value="PLDc_3"/>
</dbReference>
<dbReference type="InterPro" id="IPR001736">
    <property type="entry name" value="PLipase_D/transphosphatidylase"/>
</dbReference>
<dbReference type="PANTHER" id="PTHR10185:SF16">
    <property type="entry name" value="5'-3' EXONUCLEASE PLD3"/>
    <property type="match status" value="1"/>
</dbReference>
<dbReference type="PANTHER" id="PTHR10185">
    <property type="entry name" value="PHOSPHOLIPASE D - RELATED"/>
    <property type="match status" value="1"/>
</dbReference>
<dbReference type="Pfam" id="PF13918">
    <property type="entry name" value="PLDc_3"/>
    <property type="match status" value="1"/>
</dbReference>
<dbReference type="SMART" id="SM00155">
    <property type="entry name" value="PLDc"/>
    <property type="match status" value="2"/>
</dbReference>
<dbReference type="SUPFAM" id="SSF56024">
    <property type="entry name" value="Phospholipase D/nuclease"/>
    <property type="match status" value="2"/>
</dbReference>
<dbReference type="PROSITE" id="PS50035">
    <property type="entry name" value="PLD"/>
    <property type="match status" value="2"/>
</dbReference>
<keyword id="KW-0256">Endoplasmic reticulum</keyword>
<keyword id="KW-0967">Endosome</keyword>
<keyword id="KW-0269">Exonuclease</keyword>
<keyword id="KW-0325">Glycoprotein</keyword>
<keyword id="KW-0333">Golgi apparatus</keyword>
<keyword id="KW-0378">Hydrolase</keyword>
<keyword id="KW-0391">Immunity</keyword>
<keyword id="KW-0395">Inflammatory response</keyword>
<keyword id="KW-0458">Lysosome</keyword>
<keyword id="KW-0472">Membrane</keyword>
<keyword id="KW-0540">Nuclease</keyword>
<keyword id="KW-1185">Reference proteome</keyword>
<keyword id="KW-0677">Repeat</keyword>
<keyword id="KW-0735">Signal-anchor</keyword>
<keyword id="KW-0812">Transmembrane</keyword>
<keyword id="KW-1133">Transmembrane helix</keyword>
<keyword id="KW-0832">Ubl conjugation</keyword>
<proteinExistence type="evidence at transcript level"/>
<name>PLD3_XENTR</name>
<reference key="1">
    <citation type="submission" date="2004-09" db="EMBL/GenBank/DDBJ databases">
        <authorList>
            <consortium name="NIH - Xenopus Gene Collection (XGC) project"/>
        </authorList>
    </citation>
    <scope>NUCLEOTIDE SEQUENCE [LARGE SCALE MRNA]</scope>
</reference>